<organism>
    <name type="scientific">Shewanella piezotolerans (strain WP3 / JCM 13877)</name>
    <dbReference type="NCBI Taxonomy" id="225849"/>
    <lineage>
        <taxon>Bacteria</taxon>
        <taxon>Pseudomonadati</taxon>
        <taxon>Pseudomonadota</taxon>
        <taxon>Gammaproteobacteria</taxon>
        <taxon>Alteromonadales</taxon>
        <taxon>Shewanellaceae</taxon>
        <taxon>Shewanella</taxon>
    </lineage>
</organism>
<name>APT_SHEPW</name>
<reference key="1">
    <citation type="journal article" date="2008" name="PLoS ONE">
        <title>Environmental adaptation: genomic analysis of the piezotolerant and psychrotolerant deep-sea iron reducing bacterium Shewanella piezotolerans WP3.</title>
        <authorList>
            <person name="Wang F."/>
            <person name="Wang J."/>
            <person name="Jian H."/>
            <person name="Zhang B."/>
            <person name="Li S."/>
            <person name="Wang F."/>
            <person name="Zeng X."/>
            <person name="Gao L."/>
            <person name="Bartlett D.H."/>
            <person name="Yu J."/>
            <person name="Hu S."/>
            <person name="Xiao X."/>
        </authorList>
    </citation>
    <scope>NUCLEOTIDE SEQUENCE [LARGE SCALE GENOMIC DNA]</scope>
    <source>
        <strain>WP3 / JCM 13877</strain>
    </source>
</reference>
<keyword id="KW-0963">Cytoplasm</keyword>
<keyword id="KW-0328">Glycosyltransferase</keyword>
<keyword id="KW-0660">Purine salvage</keyword>
<keyword id="KW-0808">Transferase</keyword>
<protein>
    <recommendedName>
        <fullName evidence="1">Adenine phosphoribosyltransferase</fullName>
        <shortName evidence="1">APRT</shortName>
        <ecNumber evidence="1">2.4.2.7</ecNumber>
    </recommendedName>
</protein>
<gene>
    <name evidence="1" type="primary">apt</name>
    <name type="ordered locus">swp_1715</name>
</gene>
<comment type="function">
    <text evidence="1">Catalyzes a salvage reaction resulting in the formation of AMP, that is energically less costly than de novo synthesis.</text>
</comment>
<comment type="catalytic activity">
    <reaction evidence="1">
        <text>AMP + diphosphate = 5-phospho-alpha-D-ribose 1-diphosphate + adenine</text>
        <dbReference type="Rhea" id="RHEA:16609"/>
        <dbReference type="ChEBI" id="CHEBI:16708"/>
        <dbReference type="ChEBI" id="CHEBI:33019"/>
        <dbReference type="ChEBI" id="CHEBI:58017"/>
        <dbReference type="ChEBI" id="CHEBI:456215"/>
        <dbReference type="EC" id="2.4.2.7"/>
    </reaction>
</comment>
<comment type="pathway">
    <text evidence="1">Purine metabolism; AMP biosynthesis via salvage pathway; AMP from adenine: step 1/1.</text>
</comment>
<comment type="subunit">
    <text evidence="1">Homodimer.</text>
</comment>
<comment type="subcellular location">
    <subcellularLocation>
        <location evidence="1">Cytoplasm</location>
    </subcellularLocation>
</comment>
<comment type="similarity">
    <text evidence="1">Belongs to the purine/pyrimidine phosphoribosyltransferase family.</text>
</comment>
<feature type="chain" id="PRO_1000116182" description="Adenine phosphoribosyltransferase">
    <location>
        <begin position="1"/>
        <end position="183"/>
    </location>
</feature>
<proteinExistence type="inferred from homology"/>
<dbReference type="EC" id="2.4.2.7" evidence="1"/>
<dbReference type="EMBL" id="CP000472">
    <property type="protein sequence ID" value="ACJ28487.1"/>
    <property type="molecule type" value="Genomic_DNA"/>
</dbReference>
<dbReference type="RefSeq" id="WP_020911865.1">
    <property type="nucleotide sequence ID" value="NC_011566.1"/>
</dbReference>
<dbReference type="SMR" id="B8CMY5"/>
<dbReference type="STRING" id="225849.swp_1715"/>
<dbReference type="KEGG" id="swp:swp_1715"/>
<dbReference type="eggNOG" id="COG0503">
    <property type="taxonomic scope" value="Bacteria"/>
</dbReference>
<dbReference type="HOGENOM" id="CLU_063339_3_0_6"/>
<dbReference type="OrthoDB" id="9803963at2"/>
<dbReference type="UniPathway" id="UPA00588">
    <property type="reaction ID" value="UER00646"/>
</dbReference>
<dbReference type="Proteomes" id="UP000000753">
    <property type="component" value="Chromosome"/>
</dbReference>
<dbReference type="GO" id="GO:0005737">
    <property type="term" value="C:cytoplasm"/>
    <property type="evidence" value="ECO:0007669"/>
    <property type="project" value="UniProtKB-SubCell"/>
</dbReference>
<dbReference type="GO" id="GO:0002055">
    <property type="term" value="F:adenine binding"/>
    <property type="evidence" value="ECO:0007669"/>
    <property type="project" value="TreeGrafter"/>
</dbReference>
<dbReference type="GO" id="GO:0003999">
    <property type="term" value="F:adenine phosphoribosyltransferase activity"/>
    <property type="evidence" value="ECO:0007669"/>
    <property type="project" value="UniProtKB-UniRule"/>
</dbReference>
<dbReference type="GO" id="GO:0016208">
    <property type="term" value="F:AMP binding"/>
    <property type="evidence" value="ECO:0007669"/>
    <property type="project" value="TreeGrafter"/>
</dbReference>
<dbReference type="GO" id="GO:0006168">
    <property type="term" value="P:adenine salvage"/>
    <property type="evidence" value="ECO:0007669"/>
    <property type="project" value="InterPro"/>
</dbReference>
<dbReference type="GO" id="GO:0044209">
    <property type="term" value="P:AMP salvage"/>
    <property type="evidence" value="ECO:0007669"/>
    <property type="project" value="UniProtKB-UniRule"/>
</dbReference>
<dbReference type="GO" id="GO:0006166">
    <property type="term" value="P:purine ribonucleoside salvage"/>
    <property type="evidence" value="ECO:0007669"/>
    <property type="project" value="UniProtKB-KW"/>
</dbReference>
<dbReference type="CDD" id="cd06223">
    <property type="entry name" value="PRTases_typeI"/>
    <property type="match status" value="1"/>
</dbReference>
<dbReference type="FunFam" id="3.40.50.2020:FF:000004">
    <property type="entry name" value="Adenine phosphoribosyltransferase"/>
    <property type="match status" value="1"/>
</dbReference>
<dbReference type="Gene3D" id="3.40.50.2020">
    <property type="match status" value="1"/>
</dbReference>
<dbReference type="HAMAP" id="MF_00004">
    <property type="entry name" value="Aden_phosphoribosyltr"/>
    <property type="match status" value="1"/>
</dbReference>
<dbReference type="InterPro" id="IPR005764">
    <property type="entry name" value="Ade_phspho_trans"/>
</dbReference>
<dbReference type="InterPro" id="IPR000836">
    <property type="entry name" value="PRibTrfase_dom"/>
</dbReference>
<dbReference type="InterPro" id="IPR029057">
    <property type="entry name" value="PRTase-like"/>
</dbReference>
<dbReference type="InterPro" id="IPR050054">
    <property type="entry name" value="UPRTase/APRTase"/>
</dbReference>
<dbReference type="NCBIfam" id="TIGR01090">
    <property type="entry name" value="apt"/>
    <property type="match status" value="1"/>
</dbReference>
<dbReference type="NCBIfam" id="NF002632">
    <property type="entry name" value="PRK02304.1-1"/>
    <property type="match status" value="1"/>
</dbReference>
<dbReference type="NCBIfam" id="NF002634">
    <property type="entry name" value="PRK02304.1-3"/>
    <property type="match status" value="1"/>
</dbReference>
<dbReference type="NCBIfam" id="NF002636">
    <property type="entry name" value="PRK02304.1-5"/>
    <property type="match status" value="1"/>
</dbReference>
<dbReference type="PANTHER" id="PTHR32315">
    <property type="entry name" value="ADENINE PHOSPHORIBOSYLTRANSFERASE"/>
    <property type="match status" value="1"/>
</dbReference>
<dbReference type="PANTHER" id="PTHR32315:SF3">
    <property type="entry name" value="ADENINE PHOSPHORIBOSYLTRANSFERASE"/>
    <property type="match status" value="1"/>
</dbReference>
<dbReference type="Pfam" id="PF00156">
    <property type="entry name" value="Pribosyltran"/>
    <property type="match status" value="1"/>
</dbReference>
<dbReference type="SUPFAM" id="SSF53271">
    <property type="entry name" value="PRTase-like"/>
    <property type="match status" value="1"/>
</dbReference>
<dbReference type="PROSITE" id="PS00103">
    <property type="entry name" value="PUR_PYR_PR_TRANSFER"/>
    <property type="match status" value="1"/>
</dbReference>
<accession>B8CMY5</accession>
<sequence>MVMNTDSLALIKNSIKTIPDYPKEGILFRDVTSLLEDPQAYKLTIGLLVEHYKEQGFTKVVGTEARGFLFGAPLALELGIGFVPVRKPGKLPRETISESYELEYGHDVLEIHVDAITKEDKVLVVDDLLATGGTIEATVKLIRNLGGQVNHAAFVISLPDLGGEKRLETMDLELLSLCEFEGE</sequence>
<evidence type="ECO:0000255" key="1">
    <source>
        <dbReference type="HAMAP-Rule" id="MF_00004"/>
    </source>
</evidence>